<feature type="chain" id="PRO_1000094688" description="UDP-N-acetylglucosamine 1-carboxyvinyltransferase">
    <location>
        <begin position="1"/>
        <end position="419"/>
    </location>
</feature>
<feature type="active site" description="Proton donor" evidence="1">
    <location>
        <position position="115"/>
    </location>
</feature>
<feature type="binding site" evidence="1">
    <location>
        <begin position="22"/>
        <end position="23"/>
    </location>
    <ligand>
        <name>phosphoenolpyruvate</name>
        <dbReference type="ChEBI" id="CHEBI:58702"/>
    </ligand>
</feature>
<feature type="binding site" evidence="1">
    <location>
        <position position="91"/>
    </location>
    <ligand>
        <name>UDP-N-acetyl-alpha-D-glucosamine</name>
        <dbReference type="ChEBI" id="CHEBI:57705"/>
    </ligand>
</feature>
<feature type="binding site" evidence="1">
    <location>
        <begin position="120"/>
        <end position="124"/>
    </location>
    <ligand>
        <name>UDP-N-acetyl-alpha-D-glucosamine</name>
        <dbReference type="ChEBI" id="CHEBI:57705"/>
    </ligand>
</feature>
<feature type="binding site" evidence="1">
    <location>
        <begin position="160"/>
        <end position="163"/>
    </location>
    <ligand>
        <name>UDP-N-acetyl-alpha-D-glucosamine</name>
        <dbReference type="ChEBI" id="CHEBI:57705"/>
    </ligand>
</feature>
<feature type="binding site" evidence="1">
    <location>
        <position position="305"/>
    </location>
    <ligand>
        <name>UDP-N-acetyl-alpha-D-glucosamine</name>
        <dbReference type="ChEBI" id="CHEBI:57705"/>
    </ligand>
</feature>
<feature type="binding site" evidence="1">
    <location>
        <position position="327"/>
    </location>
    <ligand>
        <name>UDP-N-acetyl-alpha-D-glucosamine</name>
        <dbReference type="ChEBI" id="CHEBI:57705"/>
    </ligand>
</feature>
<feature type="modified residue" description="2-(S-cysteinyl)pyruvic acid O-phosphothioketal" evidence="1">
    <location>
        <position position="115"/>
    </location>
</feature>
<keyword id="KW-0131">Cell cycle</keyword>
<keyword id="KW-0132">Cell division</keyword>
<keyword id="KW-0133">Cell shape</keyword>
<keyword id="KW-0961">Cell wall biogenesis/degradation</keyword>
<keyword id="KW-0963">Cytoplasm</keyword>
<keyword id="KW-0573">Peptidoglycan synthesis</keyword>
<keyword id="KW-0670">Pyruvate</keyword>
<keyword id="KW-0808">Transferase</keyword>
<organism>
    <name type="scientific">Escherichia coli O157:H7 (strain EC4115 / EHEC)</name>
    <dbReference type="NCBI Taxonomy" id="444450"/>
    <lineage>
        <taxon>Bacteria</taxon>
        <taxon>Pseudomonadati</taxon>
        <taxon>Pseudomonadota</taxon>
        <taxon>Gammaproteobacteria</taxon>
        <taxon>Enterobacterales</taxon>
        <taxon>Enterobacteriaceae</taxon>
        <taxon>Escherichia</taxon>
    </lineage>
</organism>
<proteinExistence type="inferred from homology"/>
<comment type="function">
    <text evidence="1">Cell wall formation. Adds enolpyruvyl to UDP-N-acetylglucosamine.</text>
</comment>
<comment type="catalytic activity">
    <reaction evidence="1">
        <text>phosphoenolpyruvate + UDP-N-acetyl-alpha-D-glucosamine = UDP-N-acetyl-3-O-(1-carboxyvinyl)-alpha-D-glucosamine + phosphate</text>
        <dbReference type="Rhea" id="RHEA:18681"/>
        <dbReference type="ChEBI" id="CHEBI:43474"/>
        <dbReference type="ChEBI" id="CHEBI:57705"/>
        <dbReference type="ChEBI" id="CHEBI:58702"/>
        <dbReference type="ChEBI" id="CHEBI:68483"/>
        <dbReference type="EC" id="2.5.1.7"/>
    </reaction>
</comment>
<comment type="pathway">
    <text evidence="1">Cell wall biogenesis; peptidoglycan biosynthesis.</text>
</comment>
<comment type="subcellular location">
    <subcellularLocation>
        <location evidence="1">Cytoplasm</location>
    </subcellularLocation>
</comment>
<comment type="similarity">
    <text evidence="1">Belongs to the EPSP synthase family. MurA subfamily.</text>
</comment>
<gene>
    <name evidence="1" type="primary">murA</name>
    <name type="ordered locus">ECH74115_4511</name>
</gene>
<protein>
    <recommendedName>
        <fullName evidence="1">UDP-N-acetylglucosamine 1-carboxyvinyltransferase</fullName>
        <ecNumber evidence="1">2.5.1.7</ecNumber>
    </recommendedName>
    <alternativeName>
        <fullName evidence="1">Enoylpyruvate transferase</fullName>
    </alternativeName>
    <alternativeName>
        <fullName evidence="1">UDP-N-acetylglucosamine enolpyruvyl transferase</fullName>
        <shortName evidence="1">EPT</shortName>
    </alternativeName>
</protein>
<sequence>MDKFRVQGPTKLQGEVTISGAKNAALPILFAALLAEEPVEIQNVPKLKDVDTSMKLLSQLGAKVERNGSVHIDARDVNVFCAPYDLVKTMRASIWALGPLVARFGQGQVSLPGGCTIGARPVDLHISGLEQLGATIKLEEGYVKASVDGRLKGAHIVMDKVSVGATVTIMCAATLAEGTTIIENAAREPEIVDTANFLITLGAKISGQGTDRIVIEGVERLGGGVYRVLPDRIETGTFLVAAAISRGKIICRNTQPDTLDAVLAKLRDAGADIEVGEDWISLDMHGKRPKAVNVRTAPHPAFPTDMQAQFTLLNLVAEGTGFITETVFENRFMHVPELSRMGAHAEIESNTVICHGVEKLSGAQVMATDLRASASLVLAGCIAEGTTVVDRIYHIDRGYERIEDKLRALGANIERVKGE</sequence>
<reference key="1">
    <citation type="journal article" date="2011" name="Proc. Natl. Acad. Sci. U.S.A.">
        <title>Genomic anatomy of Escherichia coli O157:H7 outbreaks.</title>
        <authorList>
            <person name="Eppinger M."/>
            <person name="Mammel M.K."/>
            <person name="Leclerc J.E."/>
            <person name="Ravel J."/>
            <person name="Cebula T.A."/>
        </authorList>
    </citation>
    <scope>NUCLEOTIDE SEQUENCE [LARGE SCALE GENOMIC DNA]</scope>
    <source>
        <strain>EC4115 / EHEC</strain>
    </source>
</reference>
<accession>B5YS78</accession>
<evidence type="ECO:0000255" key="1">
    <source>
        <dbReference type="HAMAP-Rule" id="MF_00111"/>
    </source>
</evidence>
<name>MURA_ECO5E</name>
<dbReference type="EC" id="2.5.1.7" evidence="1"/>
<dbReference type="EMBL" id="CP001164">
    <property type="protein sequence ID" value="ACI38630.1"/>
    <property type="molecule type" value="Genomic_DNA"/>
</dbReference>
<dbReference type="RefSeq" id="WP_000357265.1">
    <property type="nucleotide sequence ID" value="NC_011353.1"/>
</dbReference>
<dbReference type="SMR" id="B5YS78"/>
<dbReference type="KEGG" id="ecf:ECH74115_4511"/>
<dbReference type="HOGENOM" id="CLU_027387_0_0_6"/>
<dbReference type="UniPathway" id="UPA00219"/>
<dbReference type="GO" id="GO:0005737">
    <property type="term" value="C:cytoplasm"/>
    <property type="evidence" value="ECO:0007669"/>
    <property type="project" value="UniProtKB-SubCell"/>
</dbReference>
<dbReference type="GO" id="GO:0008760">
    <property type="term" value="F:UDP-N-acetylglucosamine 1-carboxyvinyltransferase activity"/>
    <property type="evidence" value="ECO:0007669"/>
    <property type="project" value="UniProtKB-UniRule"/>
</dbReference>
<dbReference type="GO" id="GO:0051301">
    <property type="term" value="P:cell division"/>
    <property type="evidence" value="ECO:0007669"/>
    <property type="project" value="UniProtKB-KW"/>
</dbReference>
<dbReference type="GO" id="GO:0071555">
    <property type="term" value="P:cell wall organization"/>
    <property type="evidence" value="ECO:0007669"/>
    <property type="project" value="UniProtKB-KW"/>
</dbReference>
<dbReference type="GO" id="GO:0009252">
    <property type="term" value="P:peptidoglycan biosynthetic process"/>
    <property type="evidence" value="ECO:0007669"/>
    <property type="project" value="UniProtKB-UniRule"/>
</dbReference>
<dbReference type="GO" id="GO:0008360">
    <property type="term" value="P:regulation of cell shape"/>
    <property type="evidence" value="ECO:0007669"/>
    <property type="project" value="UniProtKB-KW"/>
</dbReference>
<dbReference type="GO" id="GO:0019277">
    <property type="term" value="P:UDP-N-acetylgalactosamine biosynthetic process"/>
    <property type="evidence" value="ECO:0007669"/>
    <property type="project" value="InterPro"/>
</dbReference>
<dbReference type="CDD" id="cd01555">
    <property type="entry name" value="UdpNAET"/>
    <property type="match status" value="1"/>
</dbReference>
<dbReference type="FunFam" id="3.65.10.10:FF:000002">
    <property type="entry name" value="UDP-N-acetylglucosamine 1-carboxyvinyltransferase"/>
    <property type="match status" value="1"/>
</dbReference>
<dbReference type="Gene3D" id="3.65.10.10">
    <property type="entry name" value="Enolpyruvate transferase domain"/>
    <property type="match status" value="2"/>
</dbReference>
<dbReference type="HAMAP" id="MF_00111">
    <property type="entry name" value="MurA"/>
    <property type="match status" value="1"/>
</dbReference>
<dbReference type="InterPro" id="IPR001986">
    <property type="entry name" value="Enolpyruvate_Tfrase_dom"/>
</dbReference>
<dbReference type="InterPro" id="IPR036968">
    <property type="entry name" value="Enolpyruvate_Tfrase_sf"/>
</dbReference>
<dbReference type="InterPro" id="IPR050068">
    <property type="entry name" value="MurA_subfamily"/>
</dbReference>
<dbReference type="InterPro" id="IPR013792">
    <property type="entry name" value="RNA3'P_cycl/enolpyr_Trfase_a/b"/>
</dbReference>
<dbReference type="InterPro" id="IPR005750">
    <property type="entry name" value="UDP_GlcNAc_COvinyl_MurA"/>
</dbReference>
<dbReference type="NCBIfam" id="TIGR01072">
    <property type="entry name" value="murA"/>
    <property type="match status" value="1"/>
</dbReference>
<dbReference type="NCBIfam" id="NF006873">
    <property type="entry name" value="PRK09369.1"/>
    <property type="match status" value="1"/>
</dbReference>
<dbReference type="PANTHER" id="PTHR43783">
    <property type="entry name" value="UDP-N-ACETYLGLUCOSAMINE 1-CARBOXYVINYLTRANSFERASE"/>
    <property type="match status" value="1"/>
</dbReference>
<dbReference type="PANTHER" id="PTHR43783:SF1">
    <property type="entry name" value="UDP-N-ACETYLGLUCOSAMINE 1-CARBOXYVINYLTRANSFERASE"/>
    <property type="match status" value="1"/>
</dbReference>
<dbReference type="Pfam" id="PF00275">
    <property type="entry name" value="EPSP_synthase"/>
    <property type="match status" value="1"/>
</dbReference>
<dbReference type="SUPFAM" id="SSF55205">
    <property type="entry name" value="EPT/RTPC-like"/>
    <property type="match status" value="1"/>
</dbReference>